<gene>
    <name evidence="1" type="primary">argG</name>
    <name type="ordered locus">AF_2252</name>
</gene>
<sequence length="390" mass="44104">MKVVLSYSGGLDTTVCIPLLKEKYGFDEVITVTVDIGQPEADIKQAEERGKKYADKHYTIDAKKEFVDSLFMLIKANGNYEGYVLGTALARPLIAEKVVEVAKKEGAEAVAHGCTGKGNDQLRFENIFRQHGFKVIAPVRELNLTREWEIEYARQHGIEVPATKEKPYSIDENLWSRSVEGGKLEDPSFEPPEDIYEWTASPEKAPDKPEIVKIDFEKGVPVALNDERMGGFELIKALNEIGGKHGVGRTDMIEDRVLGLKARENYEHPAATILITAHRDLENLVLSRRELKFKKFVEEEWAELVYYGLVNDPLFDALNAFIDKTQERVTGWVKVKLYKGSAVVVARNSPYALYSEELVSFDTESIDQRLAEGFAAFHGLQGRLFRRLFQ</sequence>
<accession>O28032</accession>
<keyword id="KW-0028">Amino-acid biosynthesis</keyword>
<keyword id="KW-0055">Arginine biosynthesis</keyword>
<keyword id="KW-0067">ATP-binding</keyword>
<keyword id="KW-0963">Cytoplasm</keyword>
<keyword id="KW-0436">Ligase</keyword>
<keyword id="KW-0547">Nucleotide-binding</keyword>
<keyword id="KW-1185">Reference proteome</keyword>
<name>ASSY_ARCFU</name>
<reference key="1">
    <citation type="journal article" date="1997" name="Nature">
        <title>The complete genome sequence of the hyperthermophilic, sulphate-reducing archaeon Archaeoglobus fulgidus.</title>
        <authorList>
            <person name="Klenk H.-P."/>
            <person name="Clayton R.A."/>
            <person name="Tomb J.-F."/>
            <person name="White O."/>
            <person name="Nelson K.E."/>
            <person name="Ketchum K.A."/>
            <person name="Dodson R.J."/>
            <person name="Gwinn M.L."/>
            <person name="Hickey E.K."/>
            <person name="Peterson J.D."/>
            <person name="Richardson D.L."/>
            <person name="Kerlavage A.R."/>
            <person name="Graham D.E."/>
            <person name="Kyrpides N.C."/>
            <person name="Fleischmann R.D."/>
            <person name="Quackenbush J."/>
            <person name="Lee N.H."/>
            <person name="Sutton G.G."/>
            <person name="Gill S.R."/>
            <person name="Kirkness E.F."/>
            <person name="Dougherty B.A."/>
            <person name="McKenney K."/>
            <person name="Adams M.D."/>
            <person name="Loftus B.J."/>
            <person name="Peterson S.N."/>
            <person name="Reich C.I."/>
            <person name="McNeil L.K."/>
            <person name="Badger J.H."/>
            <person name="Glodek A."/>
            <person name="Zhou L."/>
            <person name="Overbeek R."/>
            <person name="Gocayne J.D."/>
            <person name="Weidman J.F."/>
            <person name="McDonald L.A."/>
            <person name="Utterback T.R."/>
            <person name="Cotton M.D."/>
            <person name="Spriggs T."/>
            <person name="Artiach P."/>
            <person name="Kaine B.P."/>
            <person name="Sykes S.M."/>
            <person name="Sadow P.W."/>
            <person name="D'Andrea K.P."/>
            <person name="Bowman C."/>
            <person name="Fujii C."/>
            <person name="Garland S.A."/>
            <person name="Mason T.M."/>
            <person name="Olsen G.J."/>
            <person name="Fraser C.M."/>
            <person name="Smith H.O."/>
            <person name="Woese C.R."/>
            <person name="Venter J.C."/>
        </authorList>
    </citation>
    <scope>NUCLEOTIDE SEQUENCE [LARGE SCALE GENOMIC DNA]</scope>
    <source>
        <strain>ATCC 49558 / DSM 4304 / JCM 9628 / NBRC 100126 / VC-16</strain>
    </source>
</reference>
<comment type="catalytic activity">
    <reaction evidence="1">
        <text>L-citrulline + L-aspartate + ATP = 2-(N(omega)-L-arginino)succinate + AMP + diphosphate + H(+)</text>
        <dbReference type="Rhea" id="RHEA:10932"/>
        <dbReference type="ChEBI" id="CHEBI:15378"/>
        <dbReference type="ChEBI" id="CHEBI:29991"/>
        <dbReference type="ChEBI" id="CHEBI:30616"/>
        <dbReference type="ChEBI" id="CHEBI:33019"/>
        <dbReference type="ChEBI" id="CHEBI:57472"/>
        <dbReference type="ChEBI" id="CHEBI:57743"/>
        <dbReference type="ChEBI" id="CHEBI:456215"/>
        <dbReference type="EC" id="6.3.4.5"/>
    </reaction>
</comment>
<comment type="pathway">
    <text evidence="1">Amino-acid biosynthesis; L-arginine biosynthesis; L-arginine from L-ornithine and carbamoyl phosphate: step 2/3.</text>
</comment>
<comment type="subunit">
    <text evidence="1">Homotetramer.</text>
</comment>
<comment type="subcellular location">
    <subcellularLocation>
        <location evidence="1">Cytoplasm</location>
    </subcellularLocation>
</comment>
<comment type="similarity">
    <text evidence="1">Belongs to the argininosuccinate synthase family. Type 1 subfamily.</text>
</comment>
<proteinExistence type="inferred from homology"/>
<organism>
    <name type="scientific">Archaeoglobus fulgidus (strain ATCC 49558 / DSM 4304 / JCM 9628 / NBRC 100126 / VC-16)</name>
    <dbReference type="NCBI Taxonomy" id="224325"/>
    <lineage>
        <taxon>Archaea</taxon>
        <taxon>Methanobacteriati</taxon>
        <taxon>Methanobacteriota</taxon>
        <taxon>Archaeoglobi</taxon>
        <taxon>Archaeoglobales</taxon>
        <taxon>Archaeoglobaceae</taxon>
        <taxon>Archaeoglobus</taxon>
    </lineage>
</organism>
<feature type="chain" id="PRO_0000148671" description="Argininosuccinate synthase">
    <location>
        <begin position="1"/>
        <end position="390"/>
    </location>
</feature>
<feature type="binding site" evidence="1">
    <location>
        <begin position="6"/>
        <end position="14"/>
    </location>
    <ligand>
        <name>ATP</name>
        <dbReference type="ChEBI" id="CHEBI:30616"/>
    </ligand>
</feature>
<feature type="binding site" evidence="1">
    <location>
        <position position="83"/>
    </location>
    <ligand>
        <name>L-citrulline</name>
        <dbReference type="ChEBI" id="CHEBI:57743"/>
    </ligand>
</feature>
<feature type="binding site" evidence="1">
    <location>
        <position position="113"/>
    </location>
    <ligand>
        <name>ATP</name>
        <dbReference type="ChEBI" id="CHEBI:30616"/>
    </ligand>
</feature>
<feature type="binding site" evidence="1">
    <location>
        <position position="115"/>
    </location>
    <ligand>
        <name>L-aspartate</name>
        <dbReference type="ChEBI" id="CHEBI:29991"/>
    </ligand>
</feature>
<feature type="binding site" evidence="1">
    <location>
        <position position="119"/>
    </location>
    <ligand>
        <name>L-aspartate</name>
        <dbReference type="ChEBI" id="CHEBI:29991"/>
    </ligand>
</feature>
<feature type="binding site" evidence="1">
    <location>
        <position position="119"/>
    </location>
    <ligand>
        <name>L-citrulline</name>
        <dbReference type="ChEBI" id="CHEBI:57743"/>
    </ligand>
</feature>
<feature type="binding site" evidence="1">
    <location>
        <position position="120"/>
    </location>
    <ligand>
        <name>L-aspartate</name>
        <dbReference type="ChEBI" id="CHEBI:29991"/>
    </ligand>
</feature>
<feature type="binding site" evidence="1">
    <location>
        <position position="123"/>
    </location>
    <ligand>
        <name>L-citrulline</name>
        <dbReference type="ChEBI" id="CHEBI:57743"/>
    </ligand>
</feature>
<feature type="binding site" evidence="1">
    <location>
        <position position="169"/>
    </location>
    <ligand>
        <name>L-citrulline</name>
        <dbReference type="ChEBI" id="CHEBI:57743"/>
    </ligand>
</feature>
<feature type="binding site" evidence="1">
    <location>
        <position position="178"/>
    </location>
    <ligand>
        <name>L-citrulline</name>
        <dbReference type="ChEBI" id="CHEBI:57743"/>
    </ligand>
</feature>
<feature type="binding site" evidence="1">
    <location>
        <position position="254"/>
    </location>
    <ligand>
        <name>L-citrulline</name>
        <dbReference type="ChEBI" id="CHEBI:57743"/>
    </ligand>
</feature>
<feature type="binding site" evidence="1">
    <location>
        <position position="266"/>
    </location>
    <ligand>
        <name>L-citrulline</name>
        <dbReference type="ChEBI" id="CHEBI:57743"/>
    </ligand>
</feature>
<protein>
    <recommendedName>
        <fullName evidence="1">Argininosuccinate synthase</fullName>
        <ecNumber evidence="1">6.3.4.5</ecNumber>
    </recommendedName>
    <alternativeName>
        <fullName evidence="1">Citrulline--aspartate ligase</fullName>
    </alternativeName>
</protein>
<dbReference type="EC" id="6.3.4.5" evidence="1"/>
<dbReference type="EMBL" id="AE000782">
    <property type="protein sequence ID" value="AAB89005.1"/>
    <property type="molecule type" value="Genomic_DNA"/>
</dbReference>
<dbReference type="PIR" id="D69531">
    <property type="entry name" value="D69531"/>
</dbReference>
<dbReference type="RefSeq" id="WP_010879741.1">
    <property type="nucleotide sequence ID" value="NC_000917.1"/>
</dbReference>
<dbReference type="SMR" id="O28032"/>
<dbReference type="STRING" id="224325.AF_2252"/>
<dbReference type="PaxDb" id="224325-AF_2252"/>
<dbReference type="EnsemblBacteria" id="AAB89005">
    <property type="protein sequence ID" value="AAB89005"/>
    <property type="gene ID" value="AF_2252"/>
</dbReference>
<dbReference type="KEGG" id="afu:AF_2252"/>
<dbReference type="eggNOG" id="arCOG00112">
    <property type="taxonomic scope" value="Archaea"/>
</dbReference>
<dbReference type="HOGENOM" id="CLU_032784_4_0_2"/>
<dbReference type="OrthoDB" id="5877at2157"/>
<dbReference type="PhylomeDB" id="O28032"/>
<dbReference type="UniPathway" id="UPA00068">
    <property type="reaction ID" value="UER00113"/>
</dbReference>
<dbReference type="Proteomes" id="UP000002199">
    <property type="component" value="Chromosome"/>
</dbReference>
<dbReference type="GO" id="GO:0005737">
    <property type="term" value="C:cytoplasm"/>
    <property type="evidence" value="ECO:0007669"/>
    <property type="project" value="UniProtKB-SubCell"/>
</dbReference>
<dbReference type="GO" id="GO:0004055">
    <property type="term" value="F:argininosuccinate synthase activity"/>
    <property type="evidence" value="ECO:0007669"/>
    <property type="project" value="UniProtKB-UniRule"/>
</dbReference>
<dbReference type="GO" id="GO:0005524">
    <property type="term" value="F:ATP binding"/>
    <property type="evidence" value="ECO:0007669"/>
    <property type="project" value="UniProtKB-UniRule"/>
</dbReference>
<dbReference type="GO" id="GO:0000053">
    <property type="term" value="P:argininosuccinate metabolic process"/>
    <property type="evidence" value="ECO:0007669"/>
    <property type="project" value="TreeGrafter"/>
</dbReference>
<dbReference type="GO" id="GO:0006526">
    <property type="term" value="P:L-arginine biosynthetic process"/>
    <property type="evidence" value="ECO:0007669"/>
    <property type="project" value="UniProtKB-UniRule"/>
</dbReference>
<dbReference type="GO" id="GO:0000050">
    <property type="term" value="P:urea cycle"/>
    <property type="evidence" value="ECO:0007669"/>
    <property type="project" value="TreeGrafter"/>
</dbReference>
<dbReference type="CDD" id="cd01999">
    <property type="entry name" value="ASS"/>
    <property type="match status" value="1"/>
</dbReference>
<dbReference type="FunFam" id="3.40.50.620:FF:000019">
    <property type="entry name" value="Argininosuccinate synthase"/>
    <property type="match status" value="1"/>
</dbReference>
<dbReference type="FunFam" id="3.90.1260.10:FF:000007">
    <property type="entry name" value="Argininosuccinate synthase"/>
    <property type="match status" value="1"/>
</dbReference>
<dbReference type="Gene3D" id="3.90.1260.10">
    <property type="entry name" value="Argininosuccinate synthetase, chain A, domain 2"/>
    <property type="match status" value="1"/>
</dbReference>
<dbReference type="Gene3D" id="3.40.50.620">
    <property type="entry name" value="HUPs"/>
    <property type="match status" value="1"/>
</dbReference>
<dbReference type="HAMAP" id="MF_00005">
    <property type="entry name" value="Arg_succ_synth_type1"/>
    <property type="match status" value="1"/>
</dbReference>
<dbReference type="InterPro" id="IPR048268">
    <property type="entry name" value="Arginosuc_syn_C"/>
</dbReference>
<dbReference type="InterPro" id="IPR048267">
    <property type="entry name" value="Arginosuc_syn_N"/>
</dbReference>
<dbReference type="InterPro" id="IPR001518">
    <property type="entry name" value="Arginosuc_synth"/>
</dbReference>
<dbReference type="InterPro" id="IPR018223">
    <property type="entry name" value="Arginosuc_synth_CS"/>
</dbReference>
<dbReference type="InterPro" id="IPR023434">
    <property type="entry name" value="Arginosuc_synth_type_1_subfam"/>
</dbReference>
<dbReference type="InterPro" id="IPR024074">
    <property type="entry name" value="AS_cat/multimer_dom_body"/>
</dbReference>
<dbReference type="InterPro" id="IPR014729">
    <property type="entry name" value="Rossmann-like_a/b/a_fold"/>
</dbReference>
<dbReference type="NCBIfam" id="TIGR00032">
    <property type="entry name" value="argG"/>
    <property type="match status" value="1"/>
</dbReference>
<dbReference type="NCBIfam" id="NF001770">
    <property type="entry name" value="PRK00509.1"/>
    <property type="match status" value="1"/>
</dbReference>
<dbReference type="NCBIfam" id="NF010392">
    <property type="entry name" value="PRK13820.1"/>
    <property type="match status" value="1"/>
</dbReference>
<dbReference type="PANTHER" id="PTHR11587">
    <property type="entry name" value="ARGININOSUCCINATE SYNTHASE"/>
    <property type="match status" value="1"/>
</dbReference>
<dbReference type="PANTHER" id="PTHR11587:SF2">
    <property type="entry name" value="ARGININOSUCCINATE SYNTHASE"/>
    <property type="match status" value="1"/>
</dbReference>
<dbReference type="Pfam" id="PF20979">
    <property type="entry name" value="Arginosuc_syn_C"/>
    <property type="match status" value="1"/>
</dbReference>
<dbReference type="Pfam" id="PF00764">
    <property type="entry name" value="Arginosuc_synth"/>
    <property type="match status" value="1"/>
</dbReference>
<dbReference type="SUPFAM" id="SSF52402">
    <property type="entry name" value="Adenine nucleotide alpha hydrolases-like"/>
    <property type="match status" value="1"/>
</dbReference>
<dbReference type="SUPFAM" id="SSF69864">
    <property type="entry name" value="Argininosuccinate synthetase, C-terminal domain"/>
    <property type="match status" value="1"/>
</dbReference>
<dbReference type="PROSITE" id="PS00564">
    <property type="entry name" value="ARGININOSUCCIN_SYN_1"/>
    <property type="match status" value="1"/>
</dbReference>
<dbReference type="PROSITE" id="PS00565">
    <property type="entry name" value="ARGININOSUCCIN_SYN_2"/>
    <property type="match status" value="1"/>
</dbReference>
<evidence type="ECO:0000255" key="1">
    <source>
        <dbReference type="HAMAP-Rule" id="MF_00005"/>
    </source>
</evidence>